<evidence type="ECO:0000250" key="1">
    <source>
        <dbReference type="UniProtKB" id="P70263"/>
    </source>
</evidence>
<evidence type="ECO:0000250" key="2">
    <source>
        <dbReference type="UniProtKB" id="Q9R261"/>
    </source>
</evidence>
<evidence type="ECO:0000255" key="3"/>
<evidence type="ECO:0000255" key="4">
    <source>
        <dbReference type="PROSITE-ProRule" id="PRU00521"/>
    </source>
</evidence>
<evidence type="ECO:0000305" key="5"/>
<comment type="function">
    <text evidence="1 2">Receptor for prostaglandin D2 (PGD2). The activity of this receptor is mainly mediated by G(s) proteins that stimulate adenylate cyclase, resulting in an elevation of intracellular cAMP. A mobilization of calcium is also observed, but without formation of inositol 1,4,5-trisphosphate (By similarity). Involved in PLA2G3-dependent maturation of mast cells. PLA2G3 is secreted by immature mast cells and acts on nearby fibroblasts upstream to PTDGS to synthesize PGD2, which in turn promotes mast cell maturation and degranulation via PTGDR (By similarity).</text>
</comment>
<comment type="subcellular location">
    <subcellularLocation>
        <location evidence="5">Cell membrane</location>
        <topology evidence="5">Multi-pass membrane protein</topology>
    </subcellularLocation>
</comment>
<comment type="similarity">
    <text evidence="4">Belongs to the G-protein coupled receptor 1 family.</text>
</comment>
<feature type="chain" id="PRO_0000370710" description="Prostaglandin D2 receptor">
    <location>
        <begin position="1"/>
        <end position="361"/>
    </location>
</feature>
<feature type="topological domain" description="Extracellular" evidence="3">
    <location>
        <begin position="1"/>
        <end position="21"/>
    </location>
</feature>
<feature type="transmembrane region" description="Helical; Name=1" evidence="3">
    <location>
        <begin position="22"/>
        <end position="42"/>
    </location>
</feature>
<feature type="topological domain" description="Cytoplasmic" evidence="3">
    <location>
        <begin position="43"/>
        <end position="58"/>
    </location>
</feature>
<feature type="transmembrane region" description="Helical; Name=2" evidence="3">
    <location>
        <begin position="59"/>
        <end position="79"/>
    </location>
</feature>
<feature type="topological domain" description="Extracellular" evidence="3">
    <location>
        <begin position="80"/>
        <end position="107"/>
    </location>
</feature>
<feature type="transmembrane region" description="Helical; Name=3" evidence="3">
    <location>
        <begin position="108"/>
        <end position="128"/>
    </location>
</feature>
<feature type="topological domain" description="Cytoplasmic" evidence="3">
    <location>
        <begin position="129"/>
        <end position="150"/>
    </location>
</feature>
<feature type="transmembrane region" description="Helical; Name=4" evidence="3">
    <location>
        <begin position="151"/>
        <end position="171"/>
    </location>
</feature>
<feature type="topological domain" description="Extracellular" evidence="3">
    <location>
        <begin position="172"/>
        <end position="195"/>
    </location>
</feature>
<feature type="transmembrane region" description="Helical; Name=5" evidence="3">
    <location>
        <begin position="196"/>
        <end position="216"/>
    </location>
</feature>
<feature type="topological domain" description="Cytoplasmic" evidence="3">
    <location>
        <begin position="217"/>
        <end position="262"/>
    </location>
</feature>
<feature type="transmembrane region" description="Helical; Name=6" evidence="3">
    <location>
        <begin position="263"/>
        <end position="283"/>
    </location>
</feature>
<feature type="topological domain" description="Extracellular" evidence="3">
    <location>
        <begin position="284"/>
        <end position="310"/>
    </location>
</feature>
<feature type="transmembrane region" description="Helical; Name=7" evidence="3">
    <location>
        <begin position="311"/>
        <end position="331"/>
    </location>
</feature>
<feature type="topological domain" description="Cytoplasmic" evidence="3">
    <location>
        <begin position="332"/>
        <end position="361"/>
    </location>
</feature>
<feature type="glycosylation site" description="N-linked (GlcNAc...) asparagine" evidence="3">
    <location>
        <position position="10"/>
    </location>
</feature>
<feature type="glycosylation site" description="N-linked (GlcNAc...) asparagine" evidence="3">
    <location>
        <position position="90"/>
    </location>
</feature>
<feature type="glycosylation site" description="N-linked (GlcNAc...) asparagine" evidence="3">
    <location>
        <position position="297"/>
    </location>
</feature>
<feature type="disulfide bond" evidence="4">
    <location>
        <begin position="105"/>
        <end position="183"/>
    </location>
</feature>
<gene>
    <name type="primary">PTGDR</name>
</gene>
<proteinExistence type="evidence at transcript level"/>
<dbReference type="EMBL" id="BC140594">
    <property type="protein sequence ID" value="AAI40595.1"/>
    <property type="molecule type" value="mRNA"/>
</dbReference>
<dbReference type="RefSeq" id="NP_001091503.1">
    <property type="nucleotide sequence ID" value="NM_001098034.1"/>
</dbReference>
<dbReference type="SMR" id="A5D7K8"/>
<dbReference type="FunCoup" id="A5D7K8">
    <property type="interactions" value="72"/>
</dbReference>
<dbReference type="STRING" id="9913.ENSBTAP00000008808"/>
<dbReference type="GlyCosmos" id="A5D7K8">
    <property type="glycosylation" value="3 sites, No reported glycans"/>
</dbReference>
<dbReference type="GlyGen" id="A5D7K8">
    <property type="glycosylation" value="3 sites"/>
</dbReference>
<dbReference type="PaxDb" id="9913-ENSBTAP00000008808"/>
<dbReference type="GeneID" id="515331"/>
<dbReference type="KEGG" id="bta:515331"/>
<dbReference type="CTD" id="5729"/>
<dbReference type="eggNOG" id="KOG3656">
    <property type="taxonomic scope" value="Eukaryota"/>
</dbReference>
<dbReference type="HOGENOM" id="CLU_045991_0_2_1"/>
<dbReference type="InParanoid" id="A5D7K8"/>
<dbReference type="OrthoDB" id="5959154at2759"/>
<dbReference type="TreeFam" id="TF324982"/>
<dbReference type="Proteomes" id="UP000009136">
    <property type="component" value="Unplaced"/>
</dbReference>
<dbReference type="GO" id="GO:0005886">
    <property type="term" value="C:plasma membrane"/>
    <property type="evidence" value="ECO:0000318"/>
    <property type="project" value="GO_Central"/>
</dbReference>
<dbReference type="GO" id="GO:0004956">
    <property type="term" value="F:prostaglandin D receptor activity"/>
    <property type="evidence" value="ECO:0000318"/>
    <property type="project" value="GO_Central"/>
</dbReference>
<dbReference type="GO" id="GO:0006954">
    <property type="term" value="P:inflammatory response"/>
    <property type="evidence" value="ECO:0000318"/>
    <property type="project" value="GO_Central"/>
</dbReference>
<dbReference type="GO" id="GO:0043303">
    <property type="term" value="P:mast cell degranulation"/>
    <property type="evidence" value="ECO:0007669"/>
    <property type="project" value="UniProtKB-KW"/>
</dbReference>
<dbReference type="GO" id="GO:0007204">
    <property type="term" value="P:positive regulation of cytosolic calcium ion concentration"/>
    <property type="evidence" value="ECO:0000318"/>
    <property type="project" value="GO_Central"/>
</dbReference>
<dbReference type="FunFam" id="1.20.1070.10:FF:000175">
    <property type="entry name" value="Prostaglandin D2 receptor"/>
    <property type="match status" value="1"/>
</dbReference>
<dbReference type="Gene3D" id="1.20.1070.10">
    <property type="entry name" value="Rhodopsin 7-helix transmembrane proteins"/>
    <property type="match status" value="1"/>
</dbReference>
<dbReference type="InterPro" id="IPR000276">
    <property type="entry name" value="GPCR_Rhodpsn"/>
</dbReference>
<dbReference type="InterPro" id="IPR017452">
    <property type="entry name" value="GPCR_Rhodpsn_7TM"/>
</dbReference>
<dbReference type="InterPro" id="IPR000376">
    <property type="entry name" value="Pglndn_D_rcpt"/>
</dbReference>
<dbReference type="InterPro" id="IPR008365">
    <property type="entry name" value="Prostanoid_rcpt"/>
</dbReference>
<dbReference type="PANTHER" id="PTHR11866">
    <property type="entry name" value="G-PROTEIN COUPLED RECEPTOR FAMILY 1 MEMBER"/>
    <property type="match status" value="1"/>
</dbReference>
<dbReference type="PANTHER" id="PTHR11866:SF14">
    <property type="entry name" value="PROSTAGLANDIN D2 RECEPTOR"/>
    <property type="match status" value="1"/>
</dbReference>
<dbReference type="Pfam" id="PF00001">
    <property type="entry name" value="7tm_1"/>
    <property type="match status" value="1"/>
</dbReference>
<dbReference type="PRINTS" id="PR01788">
    <property type="entry name" value="PROSTANOIDR"/>
</dbReference>
<dbReference type="PRINTS" id="PR00854">
    <property type="entry name" value="PRSTNOIDDPR"/>
</dbReference>
<dbReference type="SUPFAM" id="SSF81321">
    <property type="entry name" value="Family A G protein-coupled receptor-like"/>
    <property type="match status" value="1"/>
</dbReference>
<dbReference type="PROSITE" id="PS50262">
    <property type="entry name" value="G_PROTEIN_RECEP_F1_2"/>
    <property type="match status" value="1"/>
</dbReference>
<protein>
    <recommendedName>
        <fullName>Prostaglandin D2 receptor</fullName>
        <shortName>PGD receptor</shortName>
        <shortName>PGD2 receptor</shortName>
    </recommendedName>
    <alternativeName>
        <fullName>Prostanoid DP receptor</fullName>
    </alternativeName>
</protein>
<reference key="1">
    <citation type="submission" date="2007-04" db="EMBL/GenBank/DDBJ databases">
        <authorList>
            <consortium name="NIH - Mammalian Gene Collection (MGC) project"/>
        </authorList>
    </citation>
    <scope>NUCLEOTIDE SEQUENCE [LARGE SCALE MRNA]</scope>
    <source>
        <strain>Hereford</strain>
        <tissue>Fetal muscle</tissue>
    </source>
</reference>
<accession>A5D7K8</accession>
<name>PD2R_BOVIN</name>
<organism>
    <name type="scientific">Bos taurus</name>
    <name type="common">Bovine</name>
    <dbReference type="NCBI Taxonomy" id="9913"/>
    <lineage>
        <taxon>Eukaryota</taxon>
        <taxon>Metazoa</taxon>
        <taxon>Chordata</taxon>
        <taxon>Craniata</taxon>
        <taxon>Vertebrata</taxon>
        <taxon>Euteleostomi</taxon>
        <taxon>Mammalia</taxon>
        <taxon>Eutheria</taxon>
        <taxon>Laurasiatheria</taxon>
        <taxon>Artiodactyla</taxon>
        <taxon>Ruminantia</taxon>
        <taxon>Pecora</taxon>
        <taxon>Bovidae</taxon>
        <taxon>Bovinae</taxon>
        <taxon>Bos</taxon>
    </lineage>
</organism>
<keyword id="KW-1003">Cell membrane</keyword>
<keyword id="KW-1015">Disulfide bond</keyword>
<keyword id="KW-0297">G-protein coupled receptor</keyword>
<keyword id="KW-0325">Glycoprotein</keyword>
<keyword id="KW-0467">Mast cell degranulation</keyword>
<keyword id="KW-0472">Membrane</keyword>
<keyword id="KW-0675">Receptor</keyword>
<keyword id="KW-1185">Reference proteome</keyword>
<keyword id="KW-0807">Transducer</keyword>
<keyword id="KW-0812">Transmembrane</keyword>
<keyword id="KW-1133">Transmembrane helix</keyword>
<sequence>MRPLFYRCHNTTSVEKGNSATMGGVLFSTGLVGNLLALGLLARSGLGSCPPRSPRPPPSVFYVLVFGLTITDLLGKCLVSPFVLSAYAQNRSLRELVPGSDSSLCQAFAFIMSFFGLASTLQLLAMALECWLSLGHPFFHRRHLTPRRGAMVAPVVGAFCLAFCALPLVGFGKFVQYCPGTWCFFQMVHEERSLSVLSYSVLYASLMLLLVLAIVLCNLSAMRNLYAMHLRLRGLLRPGSRERAEPGAGEREATPLHLEELDHLLLLALMTVLFTMCSLPLIYRAYYGAFKAVPEQNGTTEETEDLRALRFLSVISIVDPWIFIIFRTSVFRMFFRKIFIRPLIYRNWHSNSCQTNMESSL</sequence>